<sequence>MSMELDQSLDAIIASKPKGGIRKRRARSNKPKPTKNAKPAVNTASALKSVISEESKIIVSNLPTDVTEAQVKELFVKSIGPCKRVSLAYGPNGRSKGIATIIFSRPGDATRAYEQYEGRLVDGTRKMKVEIILDPSRQLNSLAARVSPASNASATASKNGAKSSKRKTTRRRRTPNRPKKSAEELDKEMDDYFGSNEKE</sequence>
<organism>
    <name type="scientific">Schizosaccharomyces pombe (strain 972 / ATCC 24843)</name>
    <name type="common">Fission yeast</name>
    <dbReference type="NCBI Taxonomy" id="284812"/>
    <lineage>
        <taxon>Eukaryota</taxon>
        <taxon>Fungi</taxon>
        <taxon>Dikarya</taxon>
        <taxon>Ascomycota</taxon>
        <taxon>Taphrinomycotina</taxon>
        <taxon>Schizosaccharomycetes</taxon>
        <taxon>Schizosaccharomycetales</taxon>
        <taxon>Schizosaccharomycetaceae</taxon>
        <taxon>Schizosaccharomyces</taxon>
    </lineage>
</organism>
<reference key="1">
    <citation type="journal article" date="1996" name="Nucleic Acids Res.">
        <title>Fission yeast genes which disrupt mitotic chromosome segregation when overexpressed.</title>
        <authorList>
            <person name="Javerzat J.-P."/>
            <person name="Cranston G."/>
            <person name="Allshire R.C."/>
        </authorList>
    </citation>
    <scope>NUCLEOTIDE SEQUENCE [MRNA]</scope>
    <source>
        <strain>972 / ATCC 24843</strain>
    </source>
</reference>
<reference key="2">
    <citation type="journal article" date="2002" name="Nature">
        <title>The genome sequence of Schizosaccharomyces pombe.</title>
        <authorList>
            <person name="Wood V."/>
            <person name="Gwilliam R."/>
            <person name="Rajandream M.A."/>
            <person name="Lyne M.H."/>
            <person name="Lyne R."/>
            <person name="Stewart A."/>
            <person name="Sgouros J.G."/>
            <person name="Peat N."/>
            <person name="Hayles J."/>
            <person name="Baker S.G."/>
            <person name="Basham D."/>
            <person name="Bowman S."/>
            <person name="Brooks K."/>
            <person name="Brown D."/>
            <person name="Brown S."/>
            <person name="Chillingworth T."/>
            <person name="Churcher C.M."/>
            <person name="Collins M."/>
            <person name="Connor R."/>
            <person name="Cronin A."/>
            <person name="Davis P."/>
            <person name="Feltwell T."/>
            <person name="Fraser A."/>
            <person name="Gentles S."/>
            <person name="Goble A."/>
            <person name="Hamlin N."/>
            <person name="Harris D.E."/>
            <person name="Hidalgo J."/>
            <person name="Hodgson G."/>
            <person name="Holroyd S."/>
            <person name="Hornsby T."/>
            <person name="Howarth S."/>
            <person name="Huckle E.J."/>
            <person name="Hunt S."/>
            <person name="Jagels K."/>
            <person name="James K.D."/>
            <person name="Jones L."/>
            <person name="Jones M."/>
            <person name="Leather S."/>
            <person name="McDonald S."/>
            <person name="McLean J."/>
            <person name="Mooney P."/>
            <person name="Moule S."/>
            <person name="Mungall K.L."/>
            <person name="Murphy L.D."/>
            <person name="Niblett D."/>
            <person name="Odell C."/>
            <person name="Oliver K."/>
            <person name="O'Neil S."/>
            <person name="Pearson D."/>
            <person name="Quail M.A."/>
            <person name="Rabbinowitsch E."/>
            <person name="Rutherford K.M."/>
            <person name="Rutter S."/>
            <person name="Saunders D."/>
            <person name="Seeger K."/>
            <person name="Sharp S."/>
            <person name="Skelton J."/>
            <person name="Simmonds M.N."/>
            <person name="Squares R."/>
            <person name="Squares S."/>
            <person name="Stevens K."/>
            <person name="Taylor K."/>
            <person name="Taylor R.G."/>
            <person name="Tivey A."/>
            <person name="Walsh S.V."/>
            <person name="Warren T."/>
            <person name="Whitehead S."/>
            <person name="Woodward J.R."/>
            <person name="Volckaert G."/>
            <person name="Aert R."/>
            <person name="Robben J."/>
            <person name="Grymonprez B."/>
            <person name="Weltjens I."/>
            <person name="Vanstreels E."/>
            <person name="Rieger M."/>
            <person name="Schaefer M."/>
            <person name="Mueller-Auer S."/>
            <person name="Gabel C."/>
            <person name="Fuchs M."/>
            <person name="Duesterhoeft A."/>
            <person name="Fritzc C."/>
            <person name="Holzer E."/>
            <person name="Moestl D."/>
            <person name="Hilbert H."/>
            <person name="Borzym K."/>
            <person name="Langer I."/>
            <person name="Beck A."/>
            <person name="Lehrach H."/>
            <person name="Reinhardt R."/>
            <person name="Pohl T.M."/>
            <person name="Eger P."/>
            <person name="Zimmermann W."/>
            <person name="Wedler H."/>
            <person name="Wambutt R."/>
            <person name="Purnelle B."/>
            <person name="Goffeau A."/>
            <person name="Cadieu E."/>
            <person name="Dreano S."/>
            <person name="Gloux S."/>
            <person name="Lelaure V."/>
            <person name="Mottier S."/>
            <person name="Galibert F."/>
            <person name="Aves S.J."/>
            <person name="Xiang Z."/>
            <person name="Hunt C."/>
            <person name="Moore K."/>
            <person name="Hurst S.M."/>
            <person name="Lucas M."/>
            <person name="Rochet M."/>
            <person name="Gaillardin C."/>
            <person name="Tallada V.A."/>
            <person name="Garzon A."/>
            <person name="Thode G."/>
            <person name="Daga R.R."/>
            <person name="Cruzado L."/>
            <person name="Jimenez J."/>
            <person name="Sanchez M."/>
            <person name="del Rey F."/>
            <person name="Benito J."/>
            <person name="Dominguez A."/>
            <person name="Revuelta J.L."/>
            <person name="Moreno S."/>
            <person name="Armstrong J."/>
            <person name="Forsburg S.L."/>
            <person name="Cerutti L."/>
            <person name="Lowe T."/>
            <person name="McCombie W.R."/>
            <person name="Paulsen I."/>
            <person name="Potashkin J."/>
            <person name="Shpakovski G.V."/>
            <person name="Ussery D."/>
            <person name="Barrell B.G."/>
            <person name="Nurse P."/>
        </authorList>
    </citation>
    <scope>NUCLEOTIDE SEQUENCE [LARGE SCALE GENOMIC DNA]</scope>
    <source>
        <strain>972 / ATCC 24843</strain>
    </source>
</reference>
<reference key="3">
    <citation type="journal article" date="2005" name="EMBO J.">
        <title>Homolog of BRCA2-interacting Dss1p and Uap56p link Mlo3p and Rae1p for mRNA export in fission yeast.</title>
        <authorList>
            <person name="Thakurta A.G."/>
            <person name="Gopal G."/>
            <person name="Yoon J.H."/>
            <person name="Kozak L."/>
            <person name="Dhar R."/>
        </authorList>
    </citation>
    <scope>FUNCTION</scope>
    <scope>INTERACTION WITH RPN15</scope>
    <scope>MEX67 AND UAP56</scope>
    <scope>SUBCELLULAR LOCATION</scope>
</reference>
<reference key="4">
    <citation type="journal article" date="2006" name="Nat. Biotechnol.">
        <title>ORFeome cloning and global analysis of protein localization in the fission yeast Schizosaccharomyces pombe.</title>
        <authorList>
            <person name="Matsuyama A."/>
            <person name="Arai R."/>
            <person name="Yashiroda Y."/>
            <person name="Shirai A."/>
            <person name="Kamata A."/>
            <person name="Sekido S."/>
            <person name="Kobayashi Y."/>
            <person name="Hashimoto A."/>
            <person name="Hamamoto M."/>
            <person name="Hiraoka Y."/>
            <person name="Horinouchi S."/>
            <person name="Yoshida M."/>
        </authorList>
    </citation>
    <scope>SUBCELLULAR LOCATION [LARGE SCALE ANALYSIS]</scope>
</reference>
<evidence type="ECO:0000255" key="1">
    <source>
        <dbReference type="PROSITE-ProRule" id="PRU00176"/>
    </source>
</evidence>
<evidence type="ECO:0000256" key="2">
    <source>
        <dbReference type="SAM" id="MobiDB-lite"/>
    </source>
</evidence>
<evidence type="ECO:0000269" key="3">
    <source>
    </source>
</evidence>
<evidence type="ECO:0000269" key="4">
    <source>
    </source>
</evidence>
<comment type="function">
    <text evidence="3">Has a role in the mRNA export process. Interferes with mitotic chromosome segregation when overexpressed.</text>
</comment>
<comment type="subunit">
    <text evidence="3">Interacts with rpn15/dss1, mex67 and uap56.</text>
</comment>
<comment type="subcellular location">
    <subcellularLocation>
        <location evidence="3 4">Nucleus</location>
    </subcellularLocation>
</comment>
<keyword id="KW-0509">mRNA transport</keyword>
<keyword id="KW-0539">Nucleus</keyword>
<keyword id="KW-1185">Reference proteome</keyword>
<keyword id="KW-0694">RNA-binding</keyword>
<keyword id="KW-0813">Transport</keyword>
<feature type="chain" id="PRO_0000081634" description="mRNA export protein mlo3">
    <location>
        <begin position="1"/>
        <end position="199"/>
    </location>
</feature>
<feature type="domain" description="RRM" evidence="1">
    <location>
        <begin position="55"/>
        <end position="134"/>
    </location>
</feature>
<feature type="region of interest" description="Disordered" evidence="2">
    <location>
        <begin position="1"/>
        <end position="41"/>
    </location>
</feature>
<feature type="region of interest" description="Disordered" evidence="2">
    <location>
        <begin position="144"/>
        <end position="199"/>
    </location>
</feature>
<feature type="compositionally biased region" description="Basic residues" evidence="2">
    <location>
        <begin position="19"/>
        <end position="35"/>
    </location>
</feature>
<feature type="compositionally biased region" description="Polar residues" evidence="2">
    <location>
        <begin position="148"/>
        <end position="161"/>
    </location>
</feature>
<feature type="compositionally biased region" description="Basic residues" evidence="2">
    <location>
        <begin position="163"/>
        <end position="179"/>
    </location>
</feature>
<protein>
    <recommendedName>
        <fullName>mRNA export protein mlo3</fullName>
    </recommendedName>
    <alternativeName>
        <fullName>RNA-annealing protein mlo3</fullName>
    </alternativeName>
</protein>
<gene>
    <name type="primary">mlo3</name>
    <name type="ORF">SPBC1D7.04</name>
</gene>
<proteinExistence type="evidence at protein level"/>
<dbReference type="EMBL" id="L42551">
    <property type="protein sequence ID" value="AAB41270.1"/>
    <property type="molecule type" value="mRNA"/>
</dbReference>
<dbReference type="EMBL" id="CU329671">
    <property type="protein sequence ID" value="CAB10980.1"/>
    <property type="molecule type" value="Genomic_DNA"/>
</dbReference>
<dbReference type="PIR" id="T39861">
    <property type="entry name" value="T39861"/>
</dbReference>
<dbReference type="RefSeq" id="NP_595715.1">
    <property type="nucleotide sequence ID" value="NM_001021613.2"/>
</dbReference>
<dbReference type="SMR" id="Q09330"/>
<dbReference type="BioGRID" id="277092">
    <property type="interactions" value="80"/>
</dbReference>
<dbReference type="FunCoup" id="Q09330">
    <property type="interactions" value="758"/>
</dbReference>
<dbReference type="STRING" id="284812.Q09330"/>
<dbReference type="iPTMnet" id="Q09330"/>
<dbReference type="PaxDb" id="4896-SPBC1D7.04.1"/>
<dbReference type="EnsemblFungi" id="SPBC1D7.04.1">
    <property type="protein sequence ID" value="SPBC1D7.04.1:pep"/>
    <property type="gene ID" value="SPBC1D7.04"/>
</dbReference>
<dbReference type="GeneID" id="2540565"/>
<dbReference type="KEGG" id="spo:2540565"/>
<dbReference type="PomBase" id="SPBC1D7.04">
    <property type="gene designation" value="mlo3"/>
</dbReference>
<dbReference type="VEuPathDB" id="FungiDB:SPBC1D7.04"/>
<dbReference type="eggNOG" id="KOG0533">
    <property type="taxonomic scope" value="Eukaryota"/>
</dbReference>
<dbReference type="HOGENOM" id="CLU_052367_2_2_1"/>
<dbReference type="InParanoid" id="Q09330"/>
<dbReference type="OMA" id="NEFGPIK"/>
<dbReference type="PhylomeDB" id="Q09330"/>
<dbReference type="Reactome" id="R-SPO-159236">
    <property type="pathway name" value="Transport of Mature mRNA derived from an Intron-Containing Transcript"/>
</dbReference>
<dbReference type="PRO" id="PR:Q09330"/>
<dbReference type="Proteomes" id="UP000002485">
    <property type="component" value="Chromosome II"/>
</dbReference>
<dbReference type="GO" id="GO:0000775">
    <property type="term" value="C:chromosome, centromeric region"/>
    <property type="evidence" value="ECO:0000314"/>
    <property type="project" value="PomBase"/>
</dbReference>
<dbReference type="GO" id="GO:0000791">
    <property type="term" value="C:euchromatin"/>
    <property type="evidence" value="ECO:0000314"/>
    <property type="project" value="PomBase"/>
</dbReference>
<dbReference type="GO" id="GO:0005634">
    <property type="term" value="C:nucleus"/>
    <property type="evidence" value="ECO:0000314"/>
    <property type="project" value="PomBase"/>
</dbReference>
<dbReference type="GO" id="GO:0000346">
    <property type="term" value="C:transcription export complex"/>
    <property type="evidence" value="ECO:0000266"/>
    <property type="project" value="PomBase"/>
</dbReference>
<dbReference type="GO" id="GO:0003729">
    <property type="term" value="F:mRNA binding"/>
    <property type="evidence" value="ECO:0000318"/>
    <property type="project" value="GO_Central"/>
</dbReference>
<dbReference type="GO" id="GO:0051028">
    <property type="term" value="P:mRNA transport"/>
    <property type="evidence" value="ECO:0007669"/>
    <property type="project" value="UniProtKB-KW"/>
</dbReference>
<dbReference type="GO" id="GO:0071040">
    <property type="term" value="P:nuclear polyadenylation-dependent antisense transcript catabolic process"/>
    <property type="evidence" value="ECO:0000315"/>
    <property type="project" value="PomBase"/>
</dbReference>
<dbReference type="GO" id="GO:0140746">
    <property type="term" value="P:siRNA catabolic process"/>
    <property type="evidence" value="ECO:0000315"/>
    <property type="project" value="PomBase"/>
</dbReference>
<dbReference type="CDD" id="cd12267">
    <property type="entry name" value="RRM_YRA1_MLO3"/>
    <property type="match status" value="1"/>
</dbReference>
<dbReference type="Gene3D" id="3.30.70.330">
    <property type="match status" value="1"/>
</dbReference>
<dbReference type="InterPro" id="IPR051229">
    <property type="entry name" value="ALYREF_mRNA_export"/>
</dbReference>
<dbReference type="InterPro" id="IPR025715">
    <property type="entry name" value="FoP_C"/>
</dbReference>
<dbReference type="InterPro" id="IPR012677">
    <property type="entry name" value="Nucleotide-bd_a/b_plait_sf"/>
</dbReference>
<dbReference type="InterPro" id="IPR035979">
    <property type="entry name" value="RBD_domain_sf"/>
</dbReference>
<dbReference type="InterPro" id="IPR000504">
    <property type="entry name" value="RRM_dom"/>
</dbReference>
<dbReference type="InterPro" id="IPR034357">
    <property type="entry name" value="Yra1/Mlo3_RRM"/>
</dbReference>
<dbReference type="PANTHER" id="PTHR19965">
    <property type="entry name" value="RNA AND EXPORT FACTOR BINDING PROTEIN"/>
    <property type="match status" value="1"/>
</dbReference>
<dbReference type="PANTHER" id="PTHR19965:SF35">
    <property type="entry name" value="RNA ANNEALING PROTEIN YRA1"/>
    <property type="match status" value="1"/>
</dbReference>
<dbReference type="Pfam" id="PF13865">
    <property type="entry name" value="FoP_duplication"/>
    <property type="match status" value="1"/>
</dbReference>
<dbReference type="Pfam" id="PF00076">
    <property type="entry name" value="RRM_1"/>
    <property type="match status" value="1"/>
</dbReference>
<dbReference type="SMART" id="SM01218">
    <property type="entry name" value="FoP_duplication"/>
    <property type="match status" value="1"/>
</dbReference>
<dbReference type="SMART" id="SM00360">
    <property type="entry name" value="RRM"/>
    <property type="match status" value="1"/>
</dbReference>
<dbReference type="SUPFAM" id="SSF54928">
    <property type="entry name" value="RNA-binding domain, RBD"/>
    <property type="match status" value="1"/>
</dbReference>
<dbReference type="PROSITE" id="PS50102">
    <property type="entry name" value="RRM"/>
    <property type="match status" value="1"/>
</dbReference>
<accession>Q09330</accession>
<name>MLO3_SCHPO</name>